<evidence type="ECO:0000255" key="1">
    <source>
        <dbReference type="HAMAP-Rule" id="MF_01456"/>
    </source>
</evidence>
<evidence type="ECO:0007829" key="2">
    <source>
        <dbReference type="PDB" id="3RKO"/>
    </source>
</evidence>
<sequence length="100" mass="10845">MIPLQHGLILAAILFVLGLTGLVIRRNLLFMLIGLEIMINASALAFVVAGSYWGQTDGQVMYILAISLAAAEASIGLALLLQLHRRRQNLNIDSVSEMRG</sequence>
<organism>
    <name type="scientific">Escherichia coli (strain B / BL21-DE3)</name>
    <dbReference type="NCBI Taxonomy" id="469008"/>
    <lineage>
        <taxon>Bacteria</taxon>
        <taxon>Pseudomonadati</taxon>
        <taxon>Pseudomonadota</taxon>
        <taxon>Gammaproteobacteria</taxon>
        <taxon>Enterobacterales</taxon>
        <taxon>Enterobacteriaceae</taxon>
        <taxon>Escherichia</taxon>
    </lineage>
</organism>
<feature type="chain" id="PRO_0000390042" description="NADH-quinone oxidoreductase subunit K">
    <location>
        <begin position="1"/>
        <end position="100"/>
    </location>
</feature>
<feature type="transmembrane region" description="Helical" evidence="1">
    <location>
        <begin position="4"/>
        <end position="24"/>
    </location>
</feature>
<feature type="transmembrane region" description="Helical" evidence="1">
    <location>
        <begin position="28"/>
        <end position="48"/>
    </location>
</feature>
<feature type="transmembrane region" description="Helical" evidence="1">
    <location>
        <begin position="60"/>
        <end position="80"/>
    </location>
</feature>
<feature type="helix" evidence="2">
    <location>
        <begin position="4"/>
        <end position="24"/>
    </location>
</feature>
<feature type="helix" evidence="2">
    <location>
        <begin position="28"/>
        <end position="52"/>
    </location>
</feature>
<feature type="helix" evidence="2">
    <location>
        <begin position="57"/>
        <end position="82"/>
    </location>
</feature>
<feature type="turn" evidence="2">
    <location>
        <begin position="83"/>
        <end position="86"/>
    </location>
</feature>
<feature type="helix" evidence="2">
    <location>
        <begin position="92"/>
        <end position="94"/>
    </location>
</feature>
<reference key="1">
    <citation type="submission" date="2009-06" db="EMBL/GenBank/DDBJ databases">
        <title>Sequencing and gene expression analysis of Escherichia coli BL21.</title>
        <authorList>
            <person name="Leparc G."/>
            <person name="Striedner G."/>
            <person name="Bayer K."/>
            <person name="Kreil D."/>
            <person name="Krempl P.M."/>
        </authorList>
    </citation>
    <scope>NUCLEOTIDE SEQUENCE [LARGE SCALE GENOMIC DNA]</scope>
    <source>
        <strain>B / BL21-DE3</strain>
    </source>
</reference>
<reference key="2">
    <citation type="submission" date="2009-07" db="EMBL/GenBank/DDBJ databases">
        <title>Complete sequence of Escherichia coli BL21(DE3).</title>
        <authorList>
            <person name="Lucas S."/>
            <person name="Copeland A."/>
            <person name="Lapidus A."/>
            <person name="Glavina del Rio T."/>
            <person name="Dalin E."/>
            <person name="Tice H."/>
            <person name="Bruce D."/>
            <person name="Goodwin L."/>
            <person name="Pitluck S."/>
            <person name="LaButti K.M."/>
            <person name="Clum A."/>
            <person name="Larimer F."/>
            <person name="Land M."/>
            <person name="Hauser L."/>
            <person name="Kyrpides N."/>
            <person name="Anderson I."/>
            <person name="Sorek R."/>
            <person name="Rubin E."/>
        </authorList>
    </citation>
    <scope>NUCLEOTIDE SEQUENCE [LARGE SCALE GENOMIC DNA]</scope>
    <source>
        <strain>B / BL21-DE3</strain>
    </source>
</reference>
<reference key="3">
    <citation type="journal article" date="2009" name="J. Mol. Biol.">
        <title>Genome sequences of Escherichia coli B strains REL606 and BL21(DE3).</title>
        <authorList>
            <person name="Jeong H."/>
            <person name="Barbe V."/>
            <person name="Lee C.H."/>
            <person name="Vallenet D."/>
            <person name="Yu D.S."/>
            <person name="Choi S.H."/>
            <person name="Couloux A."/>
            <person name="Lee S.W."/>
            <person name="Yoon S.H."/>
            <person name="Cattolico L."/>
            <person name="Hur C.G."/>
            <person name="Park H.S."/>
            <person name="Segurens B."/>
            <person name="Kim S.C."/>
            <person name="Oh T.K."/>
            <person name="Lenski R.E."/>
            <person name="Studier F.W."/>
            <person name="Daegelen P."/>
            <person name="Kim J.F."/>
        </authorList>
    </citation>
    <scope>NUCLEOTIDE SEQUENCE [LARGE SCALE GENOMIC DNA]</scope>
    <source>
        <strain>B / BL21-DE3</strain>
    </source>
</reference>
<accession>C5W716</accession>
<accession>C6E9S3</accession>
<proteinExistence type="evidence at protein level"/>
<keyword id="KW-0002">3D-structure</keyword>
<keyword id="KW-0997">Cell inner membrane</keyword>
<keyword id="KW-1003">Cell membrane</keyword>
<keyword id="KW-0472">Membrane</keyword>
<keyword id="KW-0520">NAD</keyword>
<keyword id="KW-0874">Quinone</keyword>
<keyword id="KW-1278">Translocase</keyword>
<keyword id="KW-0812">Transmembrane</keyword>
<keyword id="KW-1133">Transmembrane helix</keyword>
<keyword id="KW-0813">Transport</keyword>
<keyword id="KW-0830">Ubiquinone</keyword>
<name>NUOK_ECOBD</name>
<dbReference type="EC" id="7.1.1.-" evidence="1"/>
<dbReference type="EMBL" id="AM946981">
    <property type="protein sequence ID" value="CAQ32681.1"/>
    <property type="molecule type" value="Genomic_DNA"/>
</dbReference>
<dbReference type="EMBL" id="CP001665">
    <property type="protein sequence ID" value="ACT28445.1"/>
    <property type="molecule type" value="Genomic_DNA"/>
</dbReference>
<dbReference type="EMBL" id="CP001509">
    <property type="protein sequence ID" value="ACT44026.1"/>
    <property type="molecule type" value="Genomic_DNA"/>
</dbReference>
<dbReference type="RefSeq" id="WP_000612644.1">
    <property type="nucleotide sequence ID" value="NZ_JADXDS010000022.1"/>
</dbReference>
<dbReference type="PDB" id="3RKO">
    <property type="method" value="X-ray"/>
    <property type="resolution" value="3.00 A"/>
    <property type="chains" value="G/K=1-100"/>
</dbReference>
<dbReference type="PDBsum" id="3RKO"/>
<dbReference type="EMDB" id="EMD-13214"/>
<dbReference type="EMDB" id="EMD-13215"/>
<dbReference type="EMDB" id="EMD-13216"/>
<dbReference type="EMDB" id="EMD-13217"/>
<dbReference type="EMDB" id="EMD-13222"/>
<dbReference type="EMDB" id="EMD-13235"/>
<dbReference type="EMDB" id="EMD-13236"/>
<dbReference type="EMDB" id="EMD-13237"/>
<dbReference type="EMDB" id="EMD-13238"/>
<dbReference type="EMDB" id="EMD-13239"/>
<dbReference type="EMDB" id="EMD-13240"/>
<dbReference type="SMR" id="C5W716"/>
<dbReference type="DIP" id="DIP-59176N"/>
<dbReference type="IntAct" id="C5W716">
    <property type="interactions" value="1"/>
</dbReference>
<dbReference type="GeneID" id="93033872"/>
<dbReference type="KEGG" id="ebd:ECBD_1382"/>
<dbReference type="KEGG" id="ebe:B21_02164"/>
<dbReference type="KEGG" id="ebl:ECD_02204"/>
<dbReference type="PATRIC" id="fig|469008.15.peg.2211"/>
<dbReference type="eggNOG" id="COG0713">
    <property type="taxonomic scope" value="Bacteria"/>
</dbReference>
<dbReference type="HOGENOM" id="CLU_144724_0_1_6"/>
<dbReference type="EvolutionaryTrace" id="C5W716"/>
<dbReference type="GO" id="GO:0030964">
    <property type="term" value="C:NADH dehydrogenase complex"/>
    <property type="evidence" value="ECO:0007669"/>
    <property type="project" value="TreeGrafter"/>
</dbReference>
<dbReference type="GO" id="GO:0005886">
    <property type="term" value="C:plasma membrane"/>
    <property type="evidence" value="ECO:0007669"/>
    <property type="project" value="UniProtKB-SubCell"/>
</dbReference>
<dbReference type="GO" id="GO:0050136">
    <property type="term" value="F:NADH:ubiquinone reductase (non-electrogenic) activity"/>
    <property type="evidence" value="ECO:0007669"/>
    <property type="project" value="UniProtKB-UniRule"/>
</dbReference>
<dbReference type="GO" id="GO:0048038">
    <property type="term" value="F:quinone binding"/>
    <property type="evidence" value="ECO:0007669"/>
    <property type="project" value="UniProtKB-KW"/>
</dbReference>
<dbReference type="GO" id="GO:0042773">
    <property type="term" value="P:ATP synthesis coupled electron transport"/>
    <property type="evidence" value="ECO:0007669"/>
    <property type="project" value="InterPro"/>
</dbReference>
<dbReference type="FunFam" id="1.10.287.3510:FF:000001">
    <property type="entry name" value="NADH-quinone oxidoreductase subunit K"/>
    <property type="match status" value="1"/>
</dbReference>
<dbReference type="Gene3D" id="1.10.287.3510">
    <property type="match status" value="1"/>
</dbReference>
<dbReference type="HAMAP" id="MF_01456">
    <property type="entry name" value="NDH1_NuoK"/>
    <property type="match status" value="1"/>
</dbReference>
<dbReference type="InterPro" id="IPR001133">
    <property type="entry name" value="NADH_UbQ_OxRdtase_chain4L/K"/>
</dbReference>
<dbReference type="InterPro" id="IPR039428">
    <property type="entry name" value="NUOK/Mnh_C1-like"/>
</dbReference>
<dbReference type="NCBIfam" id="NF004319">
    <property type="entry name" value="PRK05715.1-1"/>
    <property type="match status" value="1"/>
</dbReference>
<dbReference type="NCBIfam" id="NF004320">
    <property type="entry name" value="PRK05715.1-2"/>
    <property type="match status" value="1"/>
</dbReference>
<dbReference type="PANTHER" id="PTHR11434:SF16">
    <property type="entry name" value="NADH-UBIQUINONE OXIDOREDUCTASE CHAIN 4L"/>
    <property type="match status" value="1"/>
</dbReference>
<dbReference type="PANTHER" id="PTHR11434">
    <property type="entry name" value="NADH-UBIQUINONE OXIDOREDUCTASE SUBUNIT ND4L"/>
    <property type="match status" value="1"/>
</dbReference>
<dbReference type="Pfam" id="PF00420">
    <property type="entry name" value="Oxidored_q2"/>
    <property type="match status" value="1"/>
</dbReference>
<gene>
    <name evidence="1" type="primary">nuoK</name>
    <name type="ordered locus">B21_02164</name>
    <name type="ordered locus">ECBD_1382</name>
    <name type="ordered locus">ECD_02204</name>
</gene>
<comment type="function">
    <text evidence="1">NDH-1 shuttles electrons from NADH, via FMN and iron-sulfur (Fe-S) centers, to quinones in the respiratory chain. The immediate electron acceptor for the enzyme in this species is believed to be ubiquinone. Couples the redox reaction to proton translocation (for every two electrons transferred, four hydrogen ions are translocated across the cytoplasmic membrane), and thus conserves the redox energy in a proton gradient.</text>
</comment>
<comment type="catalytic activity">
    <reaction evidence="1">
        <text>a quinone + NADH + 5 H(+)(in) = a quinol + NAD(+) + 4 H(+)(out)</text>
        <dbReference type="Rhea" id="RHEA:57888"/>
        <dbReference type="ChEBI" id="CHEBI:15378"/>
        <dbReference type="ChEBI" id="CHEBI:24646"/>
        <dbReference type="ChEBI" id="CHEBI:57540"/>
        <dbReference type="ChEBI" id="CHEBI:57945"/>
        <dbReference type="ChEBI" id="CHEBI:132124"/>
    </reaction>
</comment>
<comment type="subunit">
    <text evidence="1">NDH-1 is composed of 13 different subunits. Subunits NuoA, H, J, K, L, M, N constitute the membrane sector of the complex.</text>
</comment>
<comment type="subcellular location">
    <subcellularLocation>
        <location evidence="1">Cell inner membrane</location>
        <topology evidence="1">Multi-pass membrane protein</topology>
    </subcellularLocation>
</comment>
<comment type="similarity">
    <text evidence="1">Belongs to the complex I subunit 4L family.</text>
</comment>
<protein>
    <recommendedName>
        <fullName evidence="1">NADH-quinone oxidoreductase subunit K</fullName>
        <ecNumber evidence="1">7.1.1.-</ecNumber>
    </recommendedName>
    <alternativeName>
        <fullName evidence="1">NADH dehydrogenase I subunit K</fullName>
    </alternativeName>
    <alternativeName>
        <fullName evidence="1">NDH-1 subunit K</fullName>
    </alternativeName>
</protein>